<keyword id="KW-0413">Isomerase</keyword>
<keyword id="KW-0479">Metal-binding</keyword>
<keyword id="KW-1185">Reference proteome</keyword>
<keyword id="KW-0862">Zinc</keyword>
<feature type="chain" id="PRO_1000147777" description="4-deoxy-L-threo-5-hexosulose-uronate ketol-isomerase">
    <location>
        <begin position="1"/>
        <end position="278"/>
    </location>
</feature>
<feature type="binding site" evidence="1">
    <location>
        <position position="196"/>
    </location>
    <ligand>
        <name>Zn(2+)</name>
        <dbReference type="ChEBI" id="CHEBI:29105"/>
    </ligand>
</feature>
<feature type="binding site" evidence="1">
    <location>
        <position position="198"/>
    </location>
    <ligand>
        <name>Zn(2+)</name>
        <dbReference type="ChEBI" id="CHEBI:29105"/>
    </ligand>
</feature>
<feature type="binding site" evidence="1">
    <location>
        <position position="203"/>
    </location>
    <ligand>
        <name>Zn(2+)</name>
        <dbReference type="ChEBI" id="CHEBI:29105"/>
    </ligand>
</feature>
<feature type="binding site" evidence="1">
    <location>
        <position position="245"/>
    </location>
    <ligand>
        <name>Zn(2+)</name>
        <dbReference type="ChEBI" id="CHEBI:29105"/>
    </ligand>
</feature>
<name>KDUI_ECO55</name>
<evidence type="ECO:0000255" key="1">
    <source>
        <dbReference type="HAMAP-Rule" id="MF_00687"/>
    </source>
</evidence>
<proteinExistence type="inferred from homology"/>
<organism>
    <name type="scientific">Escherichia coli (strain 55989 / EAEC)</name>
    <dbReference type="NCBI Taxonomy" id="585055"/>
    <lineage>
        <taxon>Bacteria</taxon>
        <taxon>Pseudomonadati</taxon>
        <taxon>Pseudomonadota</taxon>
        <taxon>Gammaproteobacteria</taxon>
        <taxon>Enterobacterales</taxon>
        <taxon>Enterobacteriaceae</taxon>
        <taxon>Escherichia</taxon>
    </lineage>
</organism>
<reference key="1">
    <citation type="journal article" date="2009" name="PLoS Genet.">
        <title>Organised genome dynamics in the Escherichia coli species results in highly diverse adaptive paths.</title>
        <authorList>
            <person name="Touchon M."/>
            <person name="Hoede C."/>
            <person name="Tenaillon O."/>
            <person name="Barbe V."/>
            <person name="Baeriswyl S."/>
            <person name="Bidet P."/>
            <person name="Bingen E."/>
            <person name="Bonacorsi S."/>
            <person name="Bouchier C."/>
            <person name="Bouvet O."/>
            <person name="Calteau A."/>
            <person name="Chiapello H."/>
            <person name="Clermont O."/>
            <person name="Cruveiller S."/>
            <person name="Danchin A."/>
            <person name="Diard M."/>
            <person name="Dossat C."/>
            <person name="Karoui M.E."/>
            <person name="Frapy E."/>
            <person name="Garry L."/>
            <person name="Ghigo J.M."/>
            <person name="Gilles A.M."/>
            <person name="Johnson J."/>
            <person name="Le Bouguenec C."/>
            <person name="Lescat M."/>
            <person name="Mangenot S."/>
            <person name="Martinez-Jehanne V."/>
            <person name="Matic I."/>
            <person name="Nassif X."/>
            <person name="Oztas S."/>
            <person name="Petit M.A."/>
            <person name="Pichon C."/>
            <person name="Rouy Z."/>
            <person name="Ruf C.S."/>
            <person name="Schneider D."/>
            <person name="Tourret J."/>
            <person name="Vacherie B."/>
            <person name="Vallenet D."/>
            <person name="Medigue C."/>
            <person name="Rocha E.P.C."/>
            <person name="Denamur E."/>
        </authorList>
    </citation>
    <scope>NUCLEOTIDE SEQUENCE [LARGE SCALE GENOMIC DNA]</scope>
    <source>
        <strain>55989 / EAEC</strain>
    </source>
</reference>
<dbReference type="EC" id="5.3.1.17" evidence="1"/>
<dbReference type="EMBL" id="CU928145">
    <property type="protein sequence ID" value="CAU99041.1"/>
    <property type="molecule type" value="Genomic_DNA"/>
</dbReference>
<dbReference type="RefSeq" id="WP_000383224.1">
    <property type="nucleotide sequence ID" value="NC_011748.1"/>
</dbReference>
<dbReference type="SMR" id="B7LF20"/>
<dbReference type="KEGG" id="eck:EC55989_3120"/>
<dbReference type="HOGENOM" id="CLU_062609_0_0_6"/>
<dbReference type="UniPathway" id="UPA00545">
    <property type="reaction ID" value="UER00826"/>
</dbReference>
<dbReference type="Proteomes" id="UP000000746">
    <property type="component" value="Chromosome"/>
</dbReference>
<dbReference type="GO" id="GO:0008697">
    <property type="term" value="F:4-deoxy-L-threo-5-hexosulose-uronate ketol-isomerase activity"/>
    <property type="evidence" value="ECO:0007669"/>
    <property type="project" value="UniProtKB-UniRule"/>
</dbReference>
<dbReference type="GO" id="GO:0008270">
    <property type="term" value="F:zinc ion binding"/>
    <property type="evidence" value="ECO:0007669"/>
    <property type="project" value="UniProtKB-UniRule"/>
</dbReference>
<dbReference type="GO" id="GO:0019698">
    <property type="term" value="P:D-galacturonate catabolic process"/>
    <property type="evidence" value="ECO:0007669"/>
    <property type="project" value="TreeGrafter"/>
</dbReference>
<dbReference type="GO" id="GO:0042840">
    <property type="term" value="P:D-glucuronate catabolic process"/>
    <property type="evidence" value="ECO:0007669"/>
    <property type="project" value="TreeGrafter"/>
</dbReference>
<dbReference type="GO" id="GO:0045490">
    <property type="term" value="P:pectin catabolic process"/>
    <property type="evidence" value="ECO:0007669"/>
    <property type="project" value="UniProtKB-UniRule"/>
</dbReference>
<dbReference type="CDD" id="cd20491">
    <property type="entry name" value="cupin_KduI_C"/>
    <property type="match status" value="1"/>
</dbReference>
<dbReference type="CDD" id="cd20294">
    <property type="entry name" value="cupin_KduI_N"/>
    <property type="match status" value="1"/>
</dbReference>
<dbReference type="FunFam" id="2.60.120.10:FF:000018">
    <property type="entry name" value="4-deoxy-L-threo-5-hexosulose-uronate ketol-isomerase"/>
    <property type="match status" value="1"/>
</dbReference>
<dbReference type="FunFam" id="2.60.120.520:FF:000001">
    <property type="entry name" value="4-deoxy-L-threo-5-hexosulose-uronate ketol-isomerase"/>
    <property type="match status" value="1"/>
</dbReference>
<dbReference type="Gene3D" id="2.60.120.10">
    <property type="entry name" value="Jelly Rolls"/>
    <property type="match status" value="1"/>
</dbReference>
<dbReference type="Gene3D" id="2.60.120.520">
    <property type="entry name" value="pectin degrading enzyme 5-keto 4- deoxyuronate isomerase, domain 1"/>
    <property type="match status" value="1"/>
</dbReference>
<dbReference type="HAMAP" id="MF_00687">
    <property type="entry name" value="KduI"/>
    <property type="match status" value="1"/>
</dbReference>
<dbReference type="InterPro" id="IPR007045">
    <property type="entry name" value="KduI"/>
</dbReference>
<dbReference type="InterPro" id="IPR021120">
    <property type="entry name" value="KduI/IolB_isomerase"/>
</dbReference>
<dbReference type="InterPro" id="IPR027449">
    <property type="entry name" value="KduI_N"/>
</dbReference>
<dbReference type="InterPro" id="IPR014710">
    <property type="entry name" value="RmlC-like_jellyroll"/>
</dbReference>
<dbReference type="InterPro" id="IPR011051">
    <property type="entry name" value="RmlC_Cupin_sf"/>
</dbReference>
<dbReference type="NCBIfam" id="NF002091">
    <property type="entry name" value="PRK00924.1"/>
    <property type="match status" value="1"/>
</dbReference>
<dbReference type="PANTHER" id="PTHR38461">
    <property type="entry name" value="4-DEOXY-L-THREO-5-HEXOSULOSE-URONATE KETOL-ISOMERASE"/>
    <property type="match status" value="1"/>
</dbReference>
<dbReference type="PANTHER" id="PTHR38461:SF1">
    <property type="entry name" value="4-DEOXY-L-THREO-5-HEXOSULOSE-URONATE KETOL-ISOMERASE"/>
    <property type="match status" value="1"/>
</dbReference>
<dbReference type="Pfam" id="PF04962">
    <property type="entry name" value="KduI"/>
    <property type="match status" value="1"/>
</dbReference>
<dbReference type="PIRSF" id="PIRSF006625">
    <property type="entry name" value="KduI"/>
    <property type="match status" value="1"/>
</dbReference>
<dbReference type="SUPFAM" id="SSF51182">
    <property type="entry name" value="RmlC-like cupins"/>
    <property type="match status" value="1"/>
</dbReference>
<comment type="function">
    <text evidence="1">Catalyzes the isomerization of 5-dehydro-4-deoxy-D-glucuronate to 3-deoxy-D-glycero-2,5-hexodiulosonate.</text>
</comment>
<comment type="catalytic activity">
    <reaction evidence="1">
        <text>5-dehydro-4-deoxy-D-glucuronate = 3-deoxy-D-glycero-2,5-hexodiulosonate</text>
        <dbReference type="Rhea" id="RHEA:23896"/>
        <dbReference type="ChEBI" id="CHEBI:17117"/>
        <dbReference type="ChEBI" id="CHEBI:29071"/>
        <dbReference type="EC" id="5.3.1.17"/>
    </reaction>
</comment>
<comment type="cofactor">
    <cofactor evidence="1">
        <name>Zn(2+)</name>
        <dbReference type="ChEBI" id="CHEBI:29105"/>
    </cofactor>
    <text evidence="1">Binds 1 zinc ion per subunit.</text>
</comment>
<comment type="pathway">
    <text evidence="1">Glycan metabolism; pectin degradation; 2-dehydro-3-deoxy-D-gluconate from pectin: step 4/5.</text>
</comment>
<comment type="subunit">
    <text evidence="1">Homohexamer.</text>
</comment>
<comment type="similarity">
    <text evidence="1">Belongs to the KduI family.</text>
</comment>
<gene>
    <name evidence="1" type="primary">kduI</name>
    <name type="ordered locus">EC55989_3120</name>
</gene>
<protein>
    <recommendedName>
        <fullName evidence="1">4-deoxy-L-threo-5-hexosulose-uronate ketol-isomerase</fullName>
        <ecNumber evidence="1">5.3.1.17</ecNumber>
    </recommendedName>
    <alternativeName>
        <fullName evidence="1">5-keto-4-deoxyuronate isomerase</fullName>
    </alternativeName>
    <alternativeName>
        <fullName evidence="1">DKI isomerase</fullName>
    </alternativeName>
</protein>
<sequence length="278" mass="31091">MDVRQSIHSAHAKTLDTQGLRNEFLVEEVFVADEYTMVYSHIDRIIVGGIMPITKTVSVGGEVGKQLGVSYFLERRELGVINIGGAGTITVDGQCYEIGHRDALYVGKGAKEVVFASIDTATPAKFYYNCAPAHTTYPTKKVTPDEVSPVTLGDNLTSNRRTINKYFVPDVLETCQLSMGLTELAPGNLWNTMPCHTHERRMEVYFYFNMDDDACVFHMMGQPQETRHIVMHNEQAVISPSWSIHSGVGTKAYTFIWGMVGENQVFDDMDHVAVKDLR</sequence>
<accession>B7LF20</accession>